<sequence>MIMNMKNIFYCLLPGLLLGACSNKVYEKTGDSVIVKVQHKETGGPRLVRLQVMGDKLIHVSATADSKFADPQSLIVVPQKKQTSFAVVQNGDTITVSTEEVKASVLASTGEVWFTDKNGELILQENKGGGKTFTPIEVEGTKGYTVCQVFESPEDEAFYGLGQHQADEFNYKGKNEELFQYNTKVSVPFVVSNKNYGILLDSYSFCRFGNPNDYSQLNRIFKLYDKTGQEGALTGTYVPKKGETLVRREDSIYFENLKTIENLPKKLPLMGAKVTYEGEIEPAQTGEFKFILYYAGYVKVYLNNEPVVPERWRTAWNPNSYKFAAHLEAGKRVPLKIEWQPDGGQSYCGLRALTPVNPEEQGKQSWWSEMTKQLDYYFMAGENMDDVISGYRSLTGKSPVMPKWAMGFWQSREKYNTQEEMLGALKGFRDRKIPLDNIVLDWNHWPENAWGSHEFDKARFPDPKAMVDSIHAMHARMMISVWPKFYVTTEHFKEFDENGWMYQQSVKDSLKDWVGPGYHYGFYDAYDPDARKLFWKQMYEHYYPLGIDAWWMDASEPNVRDCTDLEYRKALCGPTALGSSTEFFNAYALMNAEAIYDGQRGVDNNKRVFLLTRSGFAGLQRYSTATWSGDIGTRWEDMKAQISAGLNFAMSGIPYWTMDIGGFCVENRYVAGQKQWNATKTENADYKEWRELNTRWYQFGAFVPLYRAHGQYPFREIWEIAPEGHPAYQSVVYYTKLRYNMMPYIYSLAGMTWFDDYTIMRPLVMDFTADAEVNDIGDQFMFGPSFMVSPVYRYGDRSREIYFPQAEGWYDFYSGKFQAGGERKVIEAPYERIPLYVRAGAIIPFGDDIQYTDEKPAEHIRLYIYQGADGEFTLYEDEGVNYNYEQGMYAMIPMKYDEATKTLVIGERQGEFPGMLKERTFTVVTVNKEKAQPFDLNAKGVTVKYNGSEQTLKL</sequence>
<dbReference type="EC" id="3.2.1.177"/>
<dbReference type="EMBL" id="AAXF02000049">
    <property type="protein sequence ID" value="EDO11437.1"/>
    <property type="molecule type" value="Genomic_DNA"/>
</dbReference>
<dbReference type="PDB" id="5JOU">
    <property type="method" value="X-ray"/>
    <property type="resolution" value="1.50 A"/>
    <property type="chains" value="A=22-954"/>
</dbReference>
<dbReference type="PDB" id="5JOV">
    <property type="method" value="X-ray"/>
    <property type="resolution" value="1.50 A"/>
    <property type="chains" value="A=22-954"/>
</dbReference>
<dbReference type="PDBsum" id="5JOU"/>
<dbReference type="PDBsum" id="5JOV"/>
<dbReference type="SMR" id="A7LXT0"/>
<dbReference type="CAZy" id="GH31">
    <property type="family name" value="Glycoside Hydrolase Family 31"/>
</dbReference>
<dbReference type="eggNOG" id="COG1501">
    <property type="taxonomic scope" value="Bacteria"/>
</dbReference>
<dbReference type="HOGENOM" id="CLU_000631_7_3_10"/>
<dbReference type="SABIO-RK" id="A7LXT0"/>
<dbReference type="UniPathway" id="UPA01045"/>
<dbReference type="Proteomes" id="UP000005475">
    <property type="component" value="Unassembled WGS sequence"/>
</dbReference>
<dbReference type="GO" id="GO:0005886">
    <property type="term" value="C:plasma membrane"/>
    <property type="evidence" value="ECO:0007669"/>
    <property type="project" value="UniProtKB-SubCell"/>
</dbReference>
<dbReference type="GO" id="GO:0061634">
    <property type="term" value="F:alpha-D-xyloside xylohydrolase"/>
    <property type="evidence" value="ECO:0007669"/>
    <property type="project" value="UniProtKB-EC"/>
</dbReference>
<dbReference type="GO" id="GO:0030246">
    <property type="term" value="F:carbohydrate binding"/>
    <property type="evidence" value="ECO:0007669"/>
    <property type="project" value="InterPro"/>
</dbReference>
<dbReference type="GO" id="GO:0004553">
    <property type="term" value="F:hydrolase activity, hydrolyzing O-glycosyl compounds"/>
    <property type="evidence" value="ECO:0000314"/>
    <property type="project" value="UniProtKB"/>
</dbReference>
<dbReference type="GO" id="GO:0085030">
    <property type="term" value="P:symbiotic process benefiting host"/>
    <property type="evidence" value="ECO:0000314"/>
    <property type="project" value="UniProtKB"/>
</dbReference>
<dbReference type="GO" id="GO:2000899">
    <property type="term" value="P:xyloglucan catabolic process"/>
    <property type="evidence" value="ECO:0000314"/>
    <property type="project" value="UniProtKB"/>
</dbReference>
<dbReference type="CDD" id="cd14752">
    <property type="entry name" value="GH31_N"/>
    <property type="match status" value="1"/>
</dbReference>
<dbReference type="CDD" id="cd06591">
    <property type="entry name" value="GH31_xylosidase_XylS"/>
    <property type="match status" value="1"/>
</dbReference>
<dbReference type="FunFam" id="3.20.20.80:FF:000346">
    <property type="entry name" value="Alpha-xylosidase BoGH31A"/>
    <property type="match status" value="1"/>
</dbReference>
<dbReference type="FunFam" id="2.60.40.1180:FF:000023">
    <property type="entry name" value="neutral alpha-glucosidase AB isoform X2"/>
    <property type="match status" value="1"/>
</dbReference>
<dbReference type="Gene3D" id="2.60.120.380">
    <property type="match status" value="1"/>
</dbReference>
<dbReference type="Gene3D" id="3.20.20.80">
    <property type="entry name" value="Glycosidases"/>
    <property type="match status" value="1"/>
</dbReference>
<dbReference type="Gene3D" id="2.60.40.1760">
    <property type="entry name" value="glycosyl hydrolase (family 31)"/>
    <property type="match status" value="1"/>
</dbReference>
<dbReference type="Gene3D" id="2.60.40.1180">
    <property type="entry name" value="Golgi alpha-mannosidase II"/>
    <property type="match status" value="2"/>
</dbReference>
<dbReference type="InterPro" id="IPR033403">
    <property type="entry name" value="DUF5110"/>
</dbReference>
<dbReference type="InterPro" id="IPR011013">
    <property type="entry name" value="Gal_mutarotase_sf_dom"/>
</dbReference>
<dbReference type="InterPro" id="IPR048395">
    <property type="entry name" value="Glyco_hydro_31_C"/>
</dbReference>
<dbReference type="InterPro" id="IPR025887">
    <property type="entry name" value="Glyco_hydro_31_N_dom"/>
</dbReference>
<dbReference type="InterPro" id="IPR000322">
    <property type="entry name" value="Glyco_hydro_31_TIM"/>
</dbReference>
<dbReference type="InterPro" id="IPR013780">
    <property type="entry name" value="Glyco_hydro_b"/>
</dbReference>
<dbReference type="InterPro" id="IPR017853">
    <property type="entry name" value="Glycoside_hydrolase_SF"/>
</dbReference>
<dbReference type="InterPro" id="IPR051816">
    <property type="entry name" value="Glycosyl_Hydrolase_31"/>
</dbReference>
<dbReference type="InterPro" id="IPR037524">
    <property type="entry name" value="PA14/GLEYA"/>
</dbReference>
<dbReference type="PANTHER" id="PTHR43863">
    <property type="entry name" value="HYDROLASE, PUTATIVE (AFU_ORTHOLOGUE AFUA_1G03140)-RELATED"/>
    <property type="match status" value="1"/>
</dbReference>
<dbReference type="PANTHER" id="PTHR43863:SF2">
    <property type="entry name" value="MALTASE-GLUCOAMYLASE"/>
    <property type="match status" value="1"/>
</dbReference>
<dbReference type="Pfam" id="PF17137">
    <property type="entry name" value="DUF5110"/>
    <property type="match status" value="1"/>
</dbReference>
<dbReference type="Pfam" id="PF13802">
    <property type="entry name" value="Gal_mutarotas_2"/>
    <property type="match status" value="1"/>
</dbReference>
<dbReference type="Pfam" id="PF01055">
    <property type="entry name" value="Glyco_hydro_31_2nd"/>
    <property type="match status" value="1"/>
</dbReference>
<dbReference type="Pfam" id="PF21365">
    <property type="entry name" value="Glyco_hydro_31_3rd"/>
    <property type="match status" value="1"/>
</dbReference>
<dbReference type="SUPFAM" id="SSF51445">
    <property type="entry name" value="(Trans)glycosidases"/>
    <property type="match status" value="1"/>
</dbReference>
<dbReference type="SUPFAM" id="SSF56988">
    <property type="entry name" value="Anthrax protective antigen"/>
    <property type="match status" value="1"/>
</dbReference>
<dbReference type="SUPFAM" id="SSF74650">
    <property type="entry name" value="Galactose mutarotase-like"/>
    <property type="match status" value="1"/>
</dbReference>
<dbReference type="SUPFAM" id="SSF51011">
    <property type="entry name" value="Glycosyl hydrolase domain"/>
    <property type="match status" value="1"/>
</dbReference>
<dbReference type="PROSITE" id="PS51820">
    <property type="entry name" value="PA14"/>
    <property type="match status" value="1"/>
</dbReference>
<dbReference type="PROSITE" id="PS51257">
    <property type="entry name" value="PROKAR_LIPOPROTEIN"/>
    <property type="match status" value="1"/>
</dbReference>
<gene>
    <name type="ORF">BACOVA_02646</name>
</gene>
<proteinExistence type="evidence at protein level"/>
<accession>A7LXT0</accession>
<name>GH31A_BACO1</name>
<comment type="function">
    <text evidence="4">Catalyzes the liberation of alpha-xylose from the non-reducing terminal glucose of xyloglucan oligosaccharides in xyloglucan degradation, converting the 'X' to 'G' units.</text>
</comment>
<comment type="catalytic activity">
    <reaction evidence="4">
        <text>Hydrolysis of terminal, non-reducing alpha-D-xylose residues with release of alpha-D-xylose.</text>
        <dbReference type="EC" id="3.2.1.177"/>
    </reaction>
</comment>
<comment type="biophysicochemical properties">
    <kinetics>
        <KM evidence="4">7.7 mM for Xyl-alpha-PNP</KM>
        <KM evidence="4">31.8 mM for Glc-alpha-PNP</KM>
        <KM evidence="4">0.223 mM for XXXG</KM>
        <KM evidence="4">0.378 mM for XLLG</KM>
        <KM evidence="4">38.1 mM for isoprimeverose</KM>
        <text>kcat is 1.6 sec(-1) for Xyl-alpha-PNP. kcat is 0.071 sec(-1) for Glc-alpha-PNP. kcat is 32.6 sec(-1) for XXXG. kcat is 31.0 sec(-1) for XLLG. kcat is 1.78 sec(-1) for isoprimeverose.</text>
    </kinetics>
    <phDependence>
        <text evidence="4">Optimum pH is 6.0-7.0.</text>
    </phDependence>
</comment>
<comment type="pathway">
    <text evidence="4">Glucan metabolism; xyloglucan degradation.</text>
</comment>
<comment type="subcellular location">
    <subcellularLocation>
        <location evidence="5">Cell inner membrane</location>
        <topology evidence="2">Lipid-anchor</topology>
    </subcellularLocation>
    <text evidence="4">Cell inner membrane localization is predicted by analogy with the archetypal sus locus.</text>
</comment>
<comment type="disruption phenotype">
    <text evidence="4">Severely reduced growth on tamarind xyloglucan and completely abolished growth on XyG oligosaccharides.</text>
</comment>
<comment type="miscellaneous">
    <text evidence="6">Gut bacteria supply the human body with energy from dietary polysaccharides through glycosidases that are absent in the human genome. Xyloglucans are a ubiquitous family of highly branched plant cell wall polysaccharides present in the vegetables we consume. Enzymes involved in xyloglucan degradation mediate the conversion of otherwise indigestible plant polysaccharides to short-chain fatty acids (PubMed:24463512).</text>
</comment>
<comment type="similarity">
    <text evidence="5">Belongs to the glycosyl hydrolase 31 family.</text>
</comment>
<reference key="1">
    <citation type="submission" date="2007-04" db="EMBL/GenBank/DDBJ databases">
        <title>Draft genome sequence of Bacteroides ovatus (ATCC 8483).</title>
        <authorList>
            <person name="Sudarsanam P."/>
            <person name="Ley R."/>
            <person name="Guruge J."/>
            <person name="Turnbaugh P.J."/>
            <person name="Mahowald M."/>
            <person name="Liep D."/>
            <person name="Gordon J."/>
        </authorList>
    </citation>
    <scope>NUCLEOTIDE SEQUENCE [LARGE SCALE GENOMIC DNA]</scope>
    <source>
        <strain>ATCC 8483 / DSM 1896 / JCM 5824 / BCRC 10623 / CCUG 4943 / NCTC 11153</strain>
    </source>
</reference>
<reference key="2">
    <citation type="journal article" date="2014" name="Nature">
        <title>A discrete genetic locus confers xyloglucan metabolism in select human gut Bacteroidetes.</title>
        <authorList>
            <person name="Larsbrink J."/>
            <person name="Rogers T.E."/>
            <person name="Hemsworth G.R."/>
            <person name="McKee L.S."/>
            <person name="Tauzin A.S."/>
            <person name="Spadiut O."/>
            <person name="Klinter S."/>
            <person name="Pudlo N.A."/>
            <person name="Urs K."/>
            <person name="Koropatkin N.M."/>
            <person name="Creagh A.L."/>
            <person name="Haynes C.A."/>
            <person name="Kelly A.G."/>
            <person name="Cederholm S.N."/>
            <person name="Davies G.J."/>
            <person name="Martens E.C."/>
            <person name="Brumer H."/>
        </authorList>
    </citation>
    <scope>FUNCTION</scope>
    <scope>CATALYTIC ACTIVITY</scope>
    <scope>BIOPHYSICOCHEMICAL PROPERTIES</scope>
    <scope>PATHWAY</scope>
    <scope>DISRUPTION PHENOTYPE</scope>
</reference>
<keyword id="KW-0002">3D-structure</keyword>
<keyword id="KW-0119">Carbohydrate metabolism</keyword>
<keyword id="KW-0997">Cell inner membrane</keyword>
<keyword id="KW-1003">Cell membrane</keyword>
<keyword id="KW-0326">Glycosidase</keyword>
<keyword id="KW-0378">Hydrolase</keyword>
<keyword id="KW-0449">Lipoprotein</keyword>
<keyword id="KW-0472">Membrane</keyword>
<keyword id="KW-0564">Palmitate</keyword>
<keyword id="KW-0624">Polysaccharide degradation</keyword>
<keyword id="KW-0732">Signal</keyword>
<protein>
    <recommendedName>
        <fullName>Alpha-xylosidase BoGH31A</fullName>
        <ecNumber>3.2.1.177</ecNumber>
    </recommendedName>
    <alternativeName>
        <fullName>Glycosyl hydrolase family protein 31A</fullName>
        <shortName>BoGH31A</shortName>
    </alternativeName>
</protein>
<organism>
    <name type="scientific">Bacteroides ovatus (strain ATCC 8483 / DSM 1896 / JCM 5824 / BCRC 10623 / CCUG 4943 / NCTC 11153)</name>
    <dbReference type="NCBI Taxonomy" id="411476"/>
    <lineage>
        <taxon>Bacteria</taxon>
        <taxon>Pseudomonadati</taxon>
        <taxon>Bacteroidota</taxon>
        <taxon>Bacteroidia</taxon>
        <taxon>Bacteroidales</taxon>
        <taxon>Bacteroidaceae</taxon>
        <taxon>Bacteroides</taxon>
    </lineage>
</organism>
<evidence type="ECO:0000250" key="1"/>
<evidence type="ECO:0000255" key="2">
    <source>
        <dbReference type="PROSITE-ProRule" id="PRU00303"/>
    </source>
</evidence>
<evidence type="ECO:0000255" key="3">
    <source>
        <dbReference type="PROSITE-ProRule" id="PRU01164"/>
    </source>
</evidence>
<evidence type="ECO:0000269" key="4">
    <source>
    </source>
</evidence>
<evidence type="ECO:0000305" key="5"/>
<evidence type="ECO:0000305" key="6">
    <source>
    </source>
</evidence>
<evidence type="ECO:0007829" key="7">
    <source>
        <dbReference type="PDB" id="5JOU"/>
    </source>
</evidence>
<evidence type="ECO:0007829" key="8">
    <source>
        <dbReference type="PDB" id="5JOV"/>
    </source>
</evidence>
<feature type="signal peptide" evidence="2">
    <location>
        <begin position="1"/>
        <end position="20"/>
    </location>
</feature>
<feature type="chain" id="PRO_0000425896" description="Alpha-xylosidase BoGH31A">
    <location>
        <begin position="21"/>
        <end position="954"/>
    </location>
</feature>
<feature type="domain" description="PA14" evidence="3">
    <location>
        <begin position="227"/>
        <end position="366"/>
    </location>
</feature>
<feature type="active site" evidence="1">
    <location>
        <position position="553"/>
    </location>
</feature>
<feature type="active site" evidence="1">
    <location>
        <position position="556"/>
    </location>
</feature>
<feature type="active site" description="Proton donor" evidence="1">
    <location>
        <position position="630"/>
    </location>
</feature>
<feature type="lipid moiety-binding region" description="N-palmitoyl cysteine" evidence="2">
    <location>
        <position position="21"/>
    </location>
</feature>
<feature type="lipid moiety-binding region" description="S-diacylglycerol cysteine" evidence="2">
    <location>
        <position position="21"/>
    </location>
</feature>
<feature type="strand" evidence="7">
    <location>
        <begin position="24"/>
        <end position="28"/>
    </location>
</feature>
<feature type="strand" evidence="7">
    <location>
        <begin position="30"/>
        <end position="36"/>
    </location>
</feature>
<feature type="strand" evidence="7">
    <location>
        <begin position="46"/>
        <end position="54"/>
    </location>
</feature>
<feature type="strand" evidence="7">
    <location>
        <begin position="57"/>
        <end position="67"/>
    </location>
</feature>
<feature type="strand" evidence="7">
    <location>
        <begin position="86"/>
        <end position="90"/>
    </location>
</feature>
<feature type="strand" evidence="7">
    <location>
        <begin position="93"/>
        <end position="97"/>
    </location>
</feature>
<feature type="strand" evidence="7">
    <location>
        <begin position="99"/>
        <end position="106"/>
    </location>
</feature>
<feature type="turn" evidence="7">
    <location>
        <begin position="107"/>
        <end position="109"/>
    </location>
</feature>
<feature type="strand" evidence="7">
    <location>
        <begin position="112"/>
        <end position="116"/>
    </location>
</feature>
<feature type="strand" evidence="7">
    <location>
        <begin position="121"/>
        <end position="125"/>
    </location>
</feature>
<feature type="strand" evidence="7">
    <location>
        <begin position="131"/>
        <end position="138"/>
    </location>
</feature>
<feature type="strand" evidence="7">
    <location>
        <begin position="141"/>
        <end position="150"/>
    </location>
</feature>
<feature type="strand" evidence="7">
    <location>
        <begin position="158"/>
        <end position="163"/>
    </location>
</feature>
<feature type="strand" evidence="7">
    <location>
        <begin position="176"/>
        <end position="178"/>
    </location>
</feature>
<feature type="strand" evidence="7">
    <location>
        <begin position="184"/>
        <end position="192"/>
    </location>
</feature>
<feature type="turn" evidence="7">
    <location>
        <begin position="193"/>
        <end position="195"/>
    </location>
</feature>
<feature type="strand" evidence="7">
    <location>
        <begin position="196"/>
        <end position="200"/>
    </location>
</feature>
<feature type="strand" evidence="7">
    <location>
        <begin position="206"/>
        <end position="209"/>
    </location>
</feature>
<feature type="helix" evidence="7">
    <location>
        <begin position="217"/>
        <end position="220"/>
    </location>
</feature>
<feature type="strand" evidence="7">
    <location>
        <begin position="221"/>
        <end position="224"/>
    </location>
</feature>
<feature type="strand" evidence="7">
    <location>
        <begin position="233"/>
        <end position="238"/>
    </location>
</feature>
<feature type="strand" evidence="7">
    <location>
        <begin position="240"/>
        <end position="242"/>
    </location>
</feature>
<feature type="strand" evidence="7">
    <location>
        <begin position="245"/>
        <end position="250"/>
    </location>
</feature>
<feature type="helix" evidence="7">
    <location>
        <begin position="259"/>
        <end position="262"/>
    </location>
</feature>
<feature type="strand" evidence="7">
    <location>
        <begin position="273"/>
        <end position="284"/>
    </location>
</feature>
<feature type="strand" evidence="7">
    <location>
        <begin position="286"/>
        <end position="294"/>
    </location>
</feature>
<feature type="strand" evidence="7">
    <location>
        <begin position="296"/>
        <end position="302"/>
    </location>
</feature>
<feature type="strand" evidence="7">
    <location>
        <begin position="305"/>
        <end position="313"/>
    </location>
</feature>
<feature type="strand" evidence="7">
    <location>
        <begin position="319"/>
        <end position="327"/>
    </location>
</feature>
<feature type="strand" evidence="7">
    <location>
        <begin position="333"/>
        <end position="340"/>
    </location>
</feature>
<feature type="strand" evidence="7">
    <location>
        <begin position="343"/>
        <end position="345"/>
    </location>
</feature>
<feature type="strand" evidence="7">
    <location>
        <begin position="348"/>
        <end position="353"/>
    </location>
</feature>
<feature type="helix" evidence="7">
    <location>
        <begin position="358"/>
        <end position="361"/>
    </location>
</feature>
<feature type="strand" evidence="7">
    <location>
        <begin position="363"/>
        <end position="380"/>
    </location>
</feature>
<feature type="helix" evidence="7">
    <location>
        <begin position="384"/>
        <end position="395"/>
    </location>
</feature>
<feature type="helix" evidence="7">
    <location>
        <begin position="403"/>
        <end position="406"/>
    </location>
</feature>
<feature type="strand" evidence="7">
    <location>
        <begin position="407"/>
        <end position="410"/>
    </location>
</feature>
<feature type="helix" evidence="7">
    <location>
        <begin position="418"/>
        <end position="431"/>
    </location>
</feature>
<feature type="strand" evidence="7">
    <location>
        <begin position="437"/>
        <end position="440"/>
    </location>
</feature>
<feature type="helix" evidence="8">
    <location>
        <begin position="447"/>
        <end position="449"/>
    </location>
</feature>
<feature type="turn" evidence="7">
    <location>
        <begin position="457"/>
        <end position="459"/>
    </location>
</feature>
<feature type="helix" evidence="7">
    <location>
        <begin position="463"/>
        <end position="472"/>
    </location>
</feature>
<feature type="strand" evidence="7">
    <location>
        <begin position="476"/>
        <end position="481"/>
    </location>
</feature>
<feature type="strand" evidence="7">
    <location>
        <begin position="483"/>
        <end position="486"/>
    </location>
</feature>
<feature type="helix" evidence="7">
    <location>
        <begin position="490"/>
        <end position="497"/>
    </location>
</feature>
<feature type="helix" evidence="7">
    <location>
        <begin position="504"/>
        <end position="507"/>
    </location>
</feature>
<feature type="strand" evidence="7">
    <location>
        <begin position="519"/>
        <end position="523"/>
    </location>
</feature>
<feature type="helix" evidence="7">
    <location>
        <begin position="528"/>
        <end position="541"/>
    </location>
</feature>
<feature type="helix" evidence="7">
    <location>
        <begin position="543"/>
        <end position="545"/>
    </location>
</feature>
<feature type="strand" evidence="7">
    <location>
        <begin position="549"/>
        <end position="552"/>
    </location>
</feature>
<feature type="turn" evidence="7">
    <location>
        <begin position="555"/>
        <end position="557"/>
    </location>
</feature>
<feature type="helix" evidence="7">
    <location>
        <begin position="565"/>
        <end position="571"/>
    </location>
</feature>
<feature type="turn" evidence="7">
    <location>
        <begin position="580"/>
        <end position="582"/>
    </location>
</feature>
<feature type="helix" evidence="7">
    <location>
        <begin position="587"/>
        <end position="602"/>
    </location>
</feature>
<feature type="strand" evidence="7">
    <location>
        <begin position="610"/>
        <end position="614"/>
    </location>
</feature>
<feature type="helix" evidence="7">
    <location>
        <begin position="619"/>
        <end position="622"/>
    </location>
</feature>
<feature type="strand" evidence="7">
    <location>
        <begin position="623"/>
        <end position="627"/>
    </location>
</feature>
<feature type="strand" evidence="8">
    <location>
        <begin position="632"/>
        <end position="634"/>
    </location>
</feature>
<feature type="helix" evidence="7">
    <location>
        <begin position="635"/>
        <end position="650"/>
    </location>
</feature>
<feature type="helix" evidence="7">
    <location>
        <begin position="667"/>
        <end position="679"/>
    </location>
</feature>
<feature type="helix" evidence="7">
    <location>
        <begin position="684"/>
        <end position="700"/>
    </location>
</feature>
<feature type="strand" evidence="7">
    <location>
        <begin position="703"/>
        <end position="708"/>
    </location>
</feature>
<feature type="strand" evidence="7">
    <location>
        <begin position="711"/>
        <end position="713"/>
    </location>
</feature>
<feature type="helix" evidence="7">
    <location>
        <begin position="717"/>
        <end position="720"/>
    </location>
</feature>
<feature type="helix" evidence="7">
    <location>
        <begin position="726"/>
        <end position="740"/>
    </location>
</feature>
<feature type="helix" evidence="7">
    <location>
        <begin position="742"/>
        <end position="754"/>
    </location>
</feature>
<feature type="strand" evidence="7">
    <location>
        <begin position="759"/>
        <end position="761"/>
    </location>
</feature>
<feature type="helix" evidence="7">
    <location>
        <begin position="763"/>
        <end position="766"/>
    </location>
</feature>
<feature type="helix" evidence="7">
    <location>
        <begin position="771"/>
        <end position="773"/>
    </location>
</feature>
<feature type="strand" evidence="7">
    <location>
        <begin position="780"/>
        <end position="782"/>
    </location>
</feature>
<feature type="turn" evidence="7">
    <location>
        <begin position="783"/>
        <end position="785"/>
    </location>
</feature>
<feature type="strand" evidence="7">
    <location>
        <begin position="786"/>
        <end position="788"/>
    </location>
</feature>
<feature type="strand" evidence="7">
    <location>
        <begin position="797"/>
        <end position="803"/>
    </location>
</feature>
<feature type="strand" evidence="7">
    <location>
        <begin position="805"/>
        <end position="807"/>
    </location>
</feature>
<feature type="strand" evidence="7">
    <location>
        <begin position="809"/>
        <end position="811"/>
    </location>
</feature>
<feature type="turn" evidence="7">
    <location>
        <begin position="812"/>
        <end position="814"/>
    </location>
</feature>
<feature type="strand" evidence="7">
    <location>
        <begin position="820"/>
        <end position="827"/>
    </location>
</feature>
<feature type="strand" evidence="7">
    <location>
        <begin position="835"/>
        <end position="838"/>
    </location>
</feature>
<feature type="strand" evidence="7">
    <location>
        <begin position="842"/>
        <end position="845"/>
    </location>
</feature>
<feature type="strand" evidence="7">
    <location>
        <begin position="859"/>
        <end position="865"/>
    </location>
</feature>
<feature type="strand" evidence="7">
    <location>
        <begin position="870"/>
        <end position="876"/>
    </location>
</feature>
<feature type="strand" evidence="7">
    <location>
        <begin position="879"/>
        <end position="882"/>
    </location>
</feature>
<feature type="helix" evidence="7">
    <location>
        <begin position="883"/>
        <end position="886"/>
    </location>
</feature>
<feature type="strand" evidence="7">
    <location>
        <begin position="890"/>
        <end position="897"/>
    </location>
</feature>
<feature type="turn" evidence="7">
    <location>
        <begin position="898"/>
        <end position="901"/>
    </location>
</feature>
<feature type="strand" evidence="7">
    <location>
        <begin position="902"/>
        <end position="905"/>
    </location>
</feature>
<feature type="strand" evidence="7">
    <location>
        <begin position="917"/>
        <end position="927"/>
    </location>
</feature>
<feature type="strand" evidence="7">
    <location>
        <begin position="941"/>
        <end position="948"/>
    </location>
</feature>
<feature type="strand" evidence="7">
    <location>
        <begin position="950"/>
        <end position="953"/>
    </location>
</feature>